<reference key="1">
    <citation type="submission" date="2008-05" db="EMBL/GenBank/DDBJ databases">
        <title>Complete genome sequence of Clostridium botulinum E3 str. Alaska E43.</title>
        <authorList>
            <person name="Brinkac L.M."/>
            <person name="Brown J.L."/>
            <person name="Bruce D."/>
            <person name="Detter C."/>
            <person name="Munk C."/>
            <person name="Smith L.A."/>
            <person name="Smith T.J."/>
            <person name="Sutton G."/>
            <person name="Brettin T.S."/>
        </authorList>
    </citation>
    <scope>NUCLEOTIDE SEQUENCE [LARGE SCALE GENOMIC DNA]</scope>
    <source>
        <strain>Alaska E43 / Type E3</strain>
    </source>
</reference>
<name>LUXS_CLOBA</name>
<accession>B2UWX8</accession>
<feature type="chain" id="PRO_1000093303" description="S-ribosylhomocysteine lyase">
    <location>
        <begin position="1"/>
        <end position="151"/>
    </location>
</feature>
<feature type="binding site" evidence="1">
    <location>
        <position position="54"/>
    </location>
    <ligand>
        <name>Fe cation</name>
        <dbReference type="ChEBI" id="CHEBI:24875"/>
    </ligand>
</feature>
<feature type="binding site" evidence="1">
    <location>
        <position position="58"/>
    </location>
    <ligand>
        <name>Fe cation</name>
        <dbReference type="ChEBI" id="CHEBI:24875"/>
    </ligand>
</feature>
<feature type="binding site" evidence="1">
    <location>
        <position position="121"/>
    </location>
    <ligand>
        <name>Fe cation</name>
        <dbReference type="ChEBI" id="CHEBI:24875"/>
    </ligand>
</feature>
<evidence type="ECO:0000255" key="1">
    <source>
        <dbReference type="HAMAP-Rule" id="MF_00091"/>
    </source>
</evidence>
<dbReference type="EC" id="4.4.1.21" evidence="1"/>
<dbReference type="EMBL" id="CP001078">
    <property type="protein sequence ID" value="ACD51959.1"/>
    <property type="molecule type" value="Genomic_DNA"/>
</dbReference>
<dbReference type="RefSeq" id="WP_012450205.1">
    <property type="nucleotide sequence ID" value="NC_010723.1"/>
</dbReference>
<dbReference type="SMR" id="B2UWX8"/>
<dbReference type="KEGG" id="cbt:CLH_2583"/>
<dbReference type="HOGENOM" id="CLU_107531_2_0_9"/>
<dbReference type="GO" id="GO:0005506">
    <property type="term" value="F:iron ion binding"/>
    <property type="evidence" value="ECO:0007669"/>
    <property type="project" value="InterPro"/>
</dbReference>
<dbReference type="GO" id="GO:0043768">
    <property type="term" value="F:S-ribosylhomocysteine lyase activity"/>
    <property type="evidence" value="ECO:0007669"/>
    <property type="project" value="UniProtKB-UniRule"/>
</dbReference>
<dbReference type="GO" id="GO:0009372">
    <property type="term" value="P:quorum sensing"/>
    <property type="evidence" value="ECO:0007669"/>
    <property type="project" value="UniProtKB-UniRule"/>
</dbReference>
<dbReference type="Gene3D" id="3.30.1360.80">
    <property type="entry name" value="S-ribosylhomocysteinase (LuxS)"/>
    <property type="match status" value="1"/>
</dbReference>
<dbReference type="HAMAP" id="MF_00091">
    <property type="entry name" value="LuxS"/>
    <property type="match status" value="1"/>
</dbReference>
<dbReference type="InterPro" id="IPR037005">
    <property type="entry name" value="LuxS_sf"/>
</dbReference>
<dbReference type="InterPro" id="IPR011249">
    <property type="entry name" value="Metalloenz_LuxS/M16"/>
</dbReference>
<dbReference type="InterPro" id="IPR003815">
    <property type="entry name" value="S-ribosylhomocysteinase"/>
</dbReference>
<dbReference type="NCBIfam" id="NF002606">
    <property type="entry name" value="PRK02260.2-4"/>
    <property type="match status" value="1"/>
</dbReference>
<dbReference type="PANTHER" id="PTHR35799">
    <property type="entry name" value="S-RIBOSYLHOMOCYSTEINE LYASE"/>
    <property type="match status" value="1"/>
</dbReference>
<dbReference type="PANTHER" id="PTHR35799:SF1">
    <property type="entry name" value="S-RIBOSYLHOMOCYSTEINE LYASE"/>
    <property type="match status" value="1"/>
</dbReference>
<dbReference type="Pfam" id="PF02664">
    <property type="entry name" value="LuxS"/>
    <property type="match status" value="1"/>
</dbReference>
<dbReference type="PIRSF" id="PIRSF006160">
    <property type="entry name" value="AI2"/>
    <property type="match status" value="1"/>
</dbReference>
<dbReference type="PRINTS" id="PR01487">
    <property type="entry name" value="LUXSPROTEIN"/>
</dbReference>
<dbReference type="SUPFAM" id="SSF63411">
    <property type="entry name" value="LuxS/MPP-like metallohydrolase"/>
    <property type="match status" value="1"/>
</dbReference>
<comment type="function">
    <text evidence="1">Involved in the synthesis of autoinducer 2 (AI-2) which is secreted by bacteria and is used to communicate both the cell density and the metabolic potential of the environment. The regulation of gene expression in response to changes in cell density is called quorum sensing. Catalyzes the transformation of S-ribosylhomocysteine (RHC) to homocysteine (HC) and 4,5-dihydroxy-2,3-pentadione (DPD).</text>
</comment>
<comment type="catalytic activity">
    <reaction evidence="1">
        <text>S-(5-deoxy-D-ribos-5-yl)-L-homocysteine = (S)-4,5-dihydroxypentane-2,3-dione + L-homocysteine</text>
        <dbReference type="Rhea" id="RHEA:17753"/>
        <dbReference type="ChEBI" id="CHEBI:29484"/>
        <dbReference type="ChEBI" id="CHEBI:58195"/>
        <dbReference type="ChEBI" id="CHEBI:58199"/>
        <dbReference type="EC" id="4.4.1.21"/>
    </reaction>
</comment>
<comment type="cofactor">
    <cofactor evidence="1">
        <name>Fe cation</name>
        <dbReference type="ChEBI" id="CHEBI:24875"/>
    </cofactor>
    <text evidence="1">Binds 1 Fe cation per subunit.</text>
</comment>
<comment type="subunit">
    <text evidence="1">Homodimer.</text>
</comment>
<comment type="similarity">
    <text evidence="1">Belongs to the LuxS family.</text>
</comment>
<proteinExistence type="inferred from homology"/>
<keyword id="KW-0071">Autoinducer synthesis</keyword>
<keyword id="KW-0408">Iron</keyword>
<keyword id="KW-0456">Lyase</keyword>
<keyword id="KW-0479">Metal-binding</keyword>
<keyword id="KW-0673">Quorum sensing</keyword>
<sequence>MEKVESFELDHRKVKAPYIRKCCLLDGKCGDKVTKFDIRFLQPNKEEFGTAAMHGLEHLLAHELRAKLEGIIDLSPMGCRTGFYLSIWGDREASEIKEALEYSLEKVLEAKEIPAANDIQCGNYRDLSLFGAKEYAKEALERGFSLNIYGE</sequence>
<gene>
    <name evidence="1" type="primary">luxS</name>
    <name type="ordered locus">CLH_2583</name>
</gene>
<organism>
    <name type="scientific">Clostridium botulinum (strain Alaska E43 / Type E3)</name>
    <dbReference type="NCBI Taxonomy" id="508767"/>
    <lineage>
        <taxon>Bacteria</taxon>
        <taxon>Bacillati</taxon>
        <taxon>Bacillota</taxon>
        <taxon>Clostridia</taxon>
        <taxon>Eubacteriales</taxon>
        <taxon>Clostridiaceae</taxon>
        <taxon>Clostridium</taxon>
    </lineage>
</organism>
<protein>
    <recommendedName>
        <fullName evidence="1">S-ribosylhomocysteine lyase</fullName>
        <ecNumber evidence="1">4.4.1.21</ecNumber>
    </recommendedName>
    <alternativeName>
        <fullName evidence="1">AI-2 synthesis protein</fullName>
    </alternativeName>
    <alternativeName>
        <fullName evidence="1">Autoinducer-2 production protein LuxS</fullName>
    </alternativeName>
</protein>